<accession>A2T330</accession>
<name>PSBD_ANGEV</name>
<comment type="function">
    <text evidence="2">Photosystem II (PSII) is a light-driven water:plastoquinone oxidoreductase that uses light energy to abstract electrons from H(2)O, generating O(2) and a proton gradient subsequently used for ATP formation. It consists of a core antenna complex that captures photons, and an electron transfer chain that converts photonic excitation into a charge separation. The D1/D2 (PsbA/PsbD) reaction center heterodimer binds P680, the primary electron donor of PSII as well as several subsequent electron acceptors. D2 is needed for assembly of a stable PSII complex.</text>
</comment>
<comment type="catalytic activity">
    <reaction evidence="2">
        <text>2 a plastoquinone + 4 hnu + 2 H2O = 2 a plastoquinol + O2</text>
        <dbReference type="Rhea" id="RHEA:36359"/>
        <dbReference type="Rhea" id="RHEA-COMP:9561"/>
        <dbReference type="Rhea" id="RHEA-COMP:9562"/>
        <dbReference type="ChEBI" id="CHEBI:15377"/>
        <dbReference type="ChEBI" id="CHEBI:15379"/>
        <dbReference type="ChEBI" id="CHEBI:17757"/>
        <dbReference type="ChEBI" id="CHEBI:30212"/>
        <dbReference type="ChEBI" id="CHEBI:62192"/>
        <dbReference type="EC" id="1.10.3.9"/>
    </reaction>
</comment>
<comment type="cofactor">
    <text evidence="2">The D1/D2 heterodimer binds P680, chlorophylls that are the primary electron donor of PSII, and subsequent electron acceptors. It shares a non-heme iron and each subunit binds pheophytin, quinone, additional chlorophylls, carotenoids and lipids. There is also a Cl(-1) ion associated with D1 and D2, which is required for oxygen evolution. The PSII complex binds additional chlorophylls, carotenoids and specific lipids.</text>
</comment>
<comment type="subunit">
    <text evidence="2">PSII is composed of 1 copy each of membrane proteins PsbA, PsbB, PsbC, PsbD, PsbE, PsbF, PsbH, PsbI, PsbJ, PsbK, PsbL, PsbM, PsbT, PsbX, PsbY, PsbZ, Psb30/Ycf12, at least 3 peripheral proteins of the oxygen-evolving complex and a large number of cofactors. It forms dimeric complexes.</text>
</comment>
<comment type="subcellular location">
    <subcellularLocation>
        <location evidence="2">Plastid</location>
        <location evidence="2">Chloroplast thylakoid membrane</location>
        <topology evidence="2">Multi-pass membrane protein</topology>
    </subcellularLocation>
</comment>
<comment type="miscellaneous">
    <text evidence="2">2 of the reaction center chlorophylls (ChlD1 and ChlD2) are entirely coordinated by water.</text>
</comment>
<comment type="similarity">
    <text evidence="2">Belongs to the reaction center PufL/M/PsbA/D family.</text>
</comment>
<proteinExistence type="inferred from homology"/>
<geneLocation type="chloroplast"/>
<keyword id="KW-0007">Acetylation</keyword>
<keyword id="KW-0148">Chlorophyll</keyword>
<keyword id="KW-0150">Chloroplast</keyword>
<keyword id="KW-0157">Chromophore</keyword>
<keyword id="KW-0249">Electron transport</keyword>
<keyword id="KW-0408">Iron</keyword>
<keyword id="KW-0460">Magnesium</keyword>
<keyword id="KW-0472">Membrane</keyword>
<keyword id="KW-0479">Metal-binding</keyword>
<keyword id="KW-0560">Oxidoreductase</keyword>
<keyword id="KW-0597">Phosphoprotein</keyword>
<keyword id="KW-0602">Photosynthesis</keyword>
<keyword id="KW-0604">Photosystem II</keyword>
<keyword id="KW-0934">Plastid</keyword>
<keyword id="KW-0793">Thylakoid</keyword>
<keyword id="KW-0812">Transmembrane</keyword>
<keyword id="KW-1133">Transmembrane helix</keyword>
<keyword id="KW-0813">Transport</keyword>
<reference key="1">
    <citation type="journal article" date="2007" name="Am. Fern J.">
        <title>The complete plastid genome sequence of Angiopteris evecta (G. Forst.) Hoffm. (Marattiaceae).</title>
        <authorList>
            <person name="Roper J.M."/>
            <person name="Hansen S.K."/>
            <person name="Wolf P.G."/>
            <person name="Karol K.G."/>
            <person name="Mandoli D.F."/>
            <person name="Everett K.D.E."/>
            <person name="Kuehl J."/>
            <person name="Boore J.L."/>
        </authorList>
    </citation>
    <scope>NUCLEOTIDE SEQUENCE [LARGE SCALE GENOMIC DNA]</scope>
</reference>
<evidence type="ECO:0000250" key="1">
    <source>
        <dbReference type="UniProtKB" id="P56761"/>
    </source>
</evidence>
<evidence type="ECO:0000255" key="2">
    <source>
        <dbReference type="HAMAP-Rule" id="MF_01383"/>
    </source>
</evidence>
<organism>
    <name type="scientific">Angiopteris evecta</name>
    <name type="common">Mule's foot fern</name>
    <name type="synonym">Polypodium evectum</name>
    <dbReference type="NCBI Taxonomy" id="13825"/>
    <lineage>
        <taxon>Eukaryota</taxon>
        <taxon>Viridiplantae</taxon>
        <taxon>Streptophyta</taxon>
        <taxon>Embryophyta</taxon>
        <taxon>Tracheophyta</taxon>
        <taxon>Polypodiopsida</taxon>
        <taxon>Marattiidae</taxon>
        <taxon>Marattiales</taxon>
        <taxon>Marattiaceae</taxon>
        <taxon>Angiopteris</taxon>
    </lineage>
</organism>
<gene>
    <name evidence="2" type="primary">psbD</name>
</gene>
<dbReference type="EC" id="1.10.3.9" evidence="2"/>
<dbReference type="EMBL" id="DQ821119">
    <property type="protein sequence ID" value="ABG79597.1"/>
    <property type="molecule type" value="Genomic_DNA"/>
</dbReference>
<dbReference type="RefSeq" id="YP_001023698.1">
    <property type="nucleotide sequence ID" value="NC_008829.1"/>
</dbReference>
<dbReference type="SMR" id="A2T330"/>
<dbReference type="GeneID" id="4788187"/>
<dbReference type="GO" id="GO:0009535">
    <property type="term" value="C:chloroplast thylakoid membrane"/>
    <property type="evidence" value="ECO:0007669"/>
    <property type="project" value="UniProtKB-SubCell"/>
</dbReference>
<dbReference type="GO" id="GO:0009523">
    <property type="term" value="C:photosystem II"/>
    <property type="evidence" value="ECO:0007669"/>
    <property type="project" value="UniProtKB-KW"/>
</dbReference>
<dbReference type="GO" id="GO:0016168">
    <property type="term" value="F:chlorophyll binding"/>
    <property type="evidence" value="ECO:0007669"/>
    <property type="project" value="UniProtKB-UniRule"/>
</dbReference>
<dbReference type="GO" id="GO:0045156">
    <property type="term" value="F:electron transporter, transferring electrons within the cyclic electron transport pathway of photosynthesis activity"/>
    <property type="evidence" value="ECO:0007669"/>
    <property type="project" value="InterPro"/>
</dbReference>
<dbReference type="GO" id="GO:0005506">
    <property type="term" value="F:iron ion binding"/>
    <property type="evidence" value="ECO:0007669"/>
    <property type="project" value="UniProtKB-UniRule"/>
</dbReference>
<dbReference type="GO" id="GO:0010242">
    <property type="term" value="F:oxygen evolving activity"/>
    <property type="evidence" value="ECO:0007669"/>
    <property type="project" value="UniProtKB-EC"/>
</dbReference>
<dbReference type="GO" id="GO:0009772">
    <property type="term" value="P:photosynthetic electron transport in photosystem II"/>
    <property type="evidence" value="ECO:0007669"/>
    <property type="project" value="InterPro"/>
</dbReference>
<dbReference type="CDD" id="cd09288">
    <property type="entry name" value="Photosystem-II_D2"/>
    <property type="match status" value="1"/>
</dbReference>
<dbReference type="FunFam" id="1.20.85.10:FF:000001">
    <property type="entry name" value="photosystem II D2 protein-like"/>
    <property type="match status" value="1"/>
</dbReference>
<dbReference type="Gene3D" id="1.20.85.10">
    <property type="entry name" value="Photosystem II protein D1-like"/>
    <property type="match status" value="1"/>
</dbReference>
<dbReference type="HAMAP" id="MF_01383">
    <property type="entry name" value="PSII_PsbD_D2"/>
    <property type="match status" value="1"/>
</dbReference>
<dbReference type="InterPro" id="IPR055266">
    <property type="entry name" value="D1/D2"/>
</dbReference>
<dbReference type="InterPro" id="IPR036854">
    <property type="entry name" value="Photo_II_D1/D2_sf"/>
</dbReference>
<dbReference type="InterPro" id="IPR000484">
    <property type="entry name" value="Photo_RC_L/M"/>
</dbReference>
<dbReference type="InterPro" id="IPR055265">
    <property type="entry name" value="Photo_RC_L/M_CS"/>
</dbReference>
<dbReference type="InterPro" id="IPR005868">
    <property type="entry name" value="PSII_PsbD/D2"/>
</dbReference>
<dbReference type="NCBIfam" id="TIGR01152">
    <property type="entry name" value="psbD"/>
    <property type="match status" value="1"/>
</dbReference>
<dbReference type="PANTHER" id="PTHR33149:SF12">
    <property type="entry name" value="PHOTOSYSTEM II D2 PROTEIN"/>
    <property type="match status" value="1"/>
</dbReference>
<dbReference type="PANTHER" id="PTHR33149">
    <property type="entry name" value="PHOTOSYSTEM II PROTEIN D1"/>
    <property type="match status" value="1"/>
</dbReference>
<dbReference type="Pfam" id="PF00124">
    <property type="entry name" value="Photo_RC"/>
    <property type="match status" value="1"/>
</dbReference>
<dbReference type="PRINTS" id="PR00256">
    <property type="entry name" value="REACTNCENTRE"/>
</dbReference>
<dbReference type="SUPFAM" id="SSF81483">
    <property type="entry name" value="Bacterial photosystem II reaction centre, L and M subunits"/>
    <property type="match status" value="1"/>
</dbReference>
<dbReference type="PROSITE" id="PS00244">
    <property type="entry name" value="REACTION_CENTER"/>
    <property type="match status" value="1"/>
</dbReference>
<protein>
    <recommendedName>
        <fullName evidence="2">Photosystem II D2 protein</fullName>
        <shortName evidence="2">PSII D2 protein</shortName>
        <ecNumber evidence="2">1.10.3.9</ecNumber>
    </recommendedName>
    <alternativeName>
        <fullName evidence="2">Photosystem Q(A) protein</fullName>
    </alternativeName>
</protein>
<feature type="initiator methionine" description="Removed" evidence="1">
    <location>
        <position position="1"/>
    </location>
</feature>
<feature type="chain" id="PRO_0000359621" description="Photosystem II D2 protein">
    <location>
        <begin position="2"/>
        <end position="353"/>
    </location>
</feature>
<feature type="transmembrane region" description="Helical" evidence="2">
    <location>
        <begin position="41"/>
        <end position="61"/>
    </location>
</feature>
<feature type="transmembrane region" description="Helical" evidence="2">
    <location>
        <begin position="125"/>
        <end position="141"/>
    </location>
</feature>
<feature type="transmembrane region" description="Helical" evidence="2">
    <location>
        <begin position="153"/>
        <end position="166"/>
    </location>
</feature>
<feature type="transmembrane region" description="Helical" evidence="2">
    <location>
        <begin position="208"/>
        <end position="228"/>
    </location>
</feature>
<feature type="transmembrane region" description="Helical" evidence="2">
    <location>
        <begin position="279"/>
        <end position="295"/>
    </location>
</feature>
<feature type="binding site" description="axial binding residue" evidence="2">
    <location>
        <position position="118"/>
    </location>
    <ligand>
        <name>chlorophyll a</name>
        <dbReference type="ChEBI" id="CHEBI:58416"/>
        <label>ChlzD2</label>
    </ligand>
    <ligandPart>
        <name>Mg</name>
        <dbReference type="ChEBI" id="CHEBI:25107"/>
    </ligandPart>
</feature>
<feature type="binding site" evidence="2">
    <location>
        <position position="130"/>
    </location>
    <ligand>
        <name>pheophytin a</name>
        <dbReference type="ChEBI" id="CHEBI:136840"/>
        <label>D2</label>
    </ligand>
</feature>
<feature type="binding site" evidence="2">
    <location>
        <position position="143"/>
    </location>
    <ligand>
        <name>pheophytin a</name>
        <dbReference type="ChEBI" id="CHEBI:136840"/>
        <label>D2</label>
    </ligand>
</feature>
<feature type="binding site" description="axial binding residue" evidence="2">
    <location>
        <position position="198"/>
    </location>
    <ligand>
        <name>chlorophyll a</name>
        <dbReference type="ChEBI" id="CHEBI:58416"/>
        <label>PD2</label>
    </ligand>
    <ligandPart>
        <name>Mg</name>
        <dbReference type="ChEBI" id="CHEBI:25107"/>
    </ligandPart>
</feature>
<feature type="binding site" evidence="2">
    <location>
        <position position="215"/>
    </location>
    <ligand>
        <name>a plastoquinone</name>
        <dbReference type="ChEBI" id="CHEBI:17757"/>
        <label>Q(A)</label>
    </ligand>
</feature>
<feature type="binding site" evidence="2">
    <location>
        <position position="215"/>
    </location>
    <ligand>
        <name>Fe cation</name>
        <dbReference type="ChEBI" id="CHEBI:24875"/>
        <note>ligand shared with heterodimeric partner</note>
    </ligand>
</feature>
<feature type="binding site" evidence="2">
    <location>
        <position position="262"/>
    </location>
    <ligand>
        <name>a plastoquinone</name>
        <dbReference type="ChEBI" id="CHEBI:17757"/>
        <label>Q(A)</label>
    </ligand>
</feature>
<feature type="binding site" evidence="2">
    <location>
        <position position="269"/>
    </location>
    <ligand>
        <name>Fe cation</name>
        <dbReference type="ChEBI" id="CHEBI:24875"/>
        <note>ligand shared with heterodimeric partner</note>
    </ligand>
</feature>
<feature type="modified residue" description="N-acetylthreonine" evidence="1">
    <location>
        <position position="2"/>
    </location>
</feature>
<feature type="modified residue" description="Phosphothreonine" evidence="1">
    <location>
        <position position="2"/>
    </location>
</feature>
<sequence length="353" mass="39403">MTIAIGKSSKEPKDLFDSMDDWLRRDRFVFVGWSGLLLFPCAYFALGGWFTGTTFVTSWYTHGLASSYLEGCNFLTAAVSTPANSLAHSLLLLWGPEAQGDFTRWCQLGGLWTFVALHGSFGLIGFMLRQFELARSVQLRPYNAIAFSGPISVFVSVSLIYPLGQAGWFFAPSFGVAAIFRFILFFQGFHNWTLNPFHMMGVAGVLGAALLCAIHGATVENTLFEDGDGANTFRAFNPTQSEETYSMVTANRFWSQIFGVAFSNKRWLHFFMLFVPVTGLWMSAIGVVGLALNLRAYDFVSQEIRAAEDPEFETFYTKNILLNEGIRAWMAAQDQPHENLVFPEEVLPRGNAL</sequence>